<name>RIMP_DEIRA</name>
<dbReference type="EMBL" id="AE000513">
    <property type="protein sequence ID" value="AAF11352.1"/>
    <property type="molecule type" value="Genomic_DNA"/>
</dbReference>
<dbReference type="PIR" id="H75350">
    <property type="entry name" value="H75350"/>
</dbReference>
<dbReference type="RefSeq" id="NP_295519.1">
    <property type="nucleotide sequence ID" value="NC_001263.1"/>
</dbReference>
<dbReference type="RefSeq" id="WP_010888431.1">
    <property type="nucleotide sequence ID" value="NC_001263.1"/>
</dbReference>
<dbReference type="SMR" id="Q9RTG8"/>
<dbReference type="FunCoup" id="Q9RTG8">
    <property type="interactions" value="247"/>
</dbReference>
<dbReference type="STRING" id="243230.DR_1796"/>
<dbReference type="PaxDb" id="243230-DR_1796"/>
<dbReference type="EnsemblBacteria" id="AAF11352">
    <property type="protein sequence ID" value="AAF11352"/>
    <property type="gene ID" value="DR_1796"/>
</dbReference>
<dbReference type="GeneID" id="69518036"/>
<dbReference type="KEGG" id="dra:DR_1796"/>
<dbReference type="PATRIC" id="fig|243230.17.peg.2009"/>
<dbReference type="eggNOG" id="COG0779">
    <property type="taxonomic scope" value="Bacteria"/>
</dbReference>
<dbReference type="HOGENOM" id="CLU_070525_1_1_0"/>
<dbReference type="InParanoid" id="Q9RTG8"/>
<dbReference type="OrthoDB" id="9805006at2"/>
<dbReference type="Proteomes" id="UP000002524">
    <property type="component" value="Chromosome 1"/>
</dbReference>
<dbReference type="GO" id="GO:0005829">
    <property type="term" value="C:cytosol"/>
    <property type="evidence" value="ECO:0000318"/>
    <property type="project" value="GO_Central"/>
</dbReference>
<dbReference type="GO" id="GO:0000028">
    <property type="term" value="P:ribosomal small subunit assembly"/>
    <property type="evidence" value="ECO:0000318"/>
    <property type="project" value="GO_Central"/>
</dbReference>
<dbReference type="GO" id="GO:0006412">
    <property type="term" value="P:translation"/>
    <property type="evidence" value="ECO:0000318"/>
    <property type="project" value="GO_Central"/>
</dbReference>
<dbReference type="Gene3D" id="3.30.300.70">
    <property type="entry name" value="RimP-like superfamily, N-terminal"/>
    <property type="match status" value="1"/>
</dbReference>
<dbReference type="HAMAP" id="MF_01077">
    <property type="entry name" value="RimP"/>
    <property type="match status" value="1"/>
</dbReference>
<dbReference type="InterPro" id="IPR003728">
    <property type="entry name" value="Ribosome_maturation_RimP"/>
</dbReference>
<dbReference type="InterPro" id="IPR028998">
    <property type="entry name" value="RimP_C"/>
</dbReference>
<dbReference type="InterPro" id="IPR036847">
    <property type="entry name" value="RimP_C_sf"/>
</dbReference>
<dbReference type="InterPro" id="IPR028989">
    <property type="entry name" value="RimP_N"/>
</dbReference>
<dbReference type="InterPro" id="IPR035956">
    <property type="entry name" value="RimP_N_sf"/>
</dbReference>
<dbReference type="NCBIfam" id="NF011239">
    <property type="entry name" value="PRK14645.1"/>
    <property type="match status" value="1"/>
</dbReference>
<dbReference type="PANTHER" id="PTHR33867">
    <property type="entry name" value="RIBOSOME MATURATION FACTOR RIMP"/>
    <property type="match status" value="1"/>
</dbReference>
<dbReference type="PANTHER" id="PTHR33867:SF1">
    <property type="entry name" value="RIBOSOME MATURATION FACTOR RIMP"/>
    <property type="match status" value="1"/>
</dbReference>
<dbReference type="Pfam" id="PF17384">
    <property type="entry name" value="DUF150_C"/>
    <property type="match status" value="1"/>
</dbReference>
<dbReference type="Pfam" id="PF02576">
    <property type="entry name" value="RimP_N"/>
    <property type="match status" value="1"/>
</dbReference>
<dbReference type="SUPFAM" id="SSF74942">
    <property type="entry name" value="YhbC-like, C-terminal domain"/>
    <property type="match status" value="1"/>
</dbReference>
<dbReference type="SUPFAM" id="SSF75420">
    <property type="entry name" value="YhbC-like, N-terminal domain"/>
    <property type="match status" value="1"/>
</dbReference>
<gene>
    <name evidence="1" type="primary">rimP</name>
    <name type="ordered locus">DR_1796</name>
</gene>
<keyword id="KW-0963">Cytoplasm</keyword>
<keyword id="KW-1185">Reference proteome</keyword>
<keyword id="KW-0690">Ribosome biogenesis</keyword>
<feature type="chain" id="PRO_0000181867" description="Ribosome maturation factor RimP">
    <location>
        <begin position="1"/>
        <end position="158"/>
    </location>
</feature>
<organism>
    <name type="scientific">Deinococcus radiodurans (strain ATCC 13939 / DSM 20539 / JCM 16871 / CCUG 27074 / LMG 4051 / NBRC 15346 / NCIMB 9279 / VKM B-1422 / R1)</name>
    <dbReference type="NCBI Taxonomy" id="243230"/>
    <lineage>
        <taxon>Bacteria</taxon>
        <taxon>Thermotogati</taxon>
        <taxon>Deinococcota</taxon>
        <taxon>Deinococci</taxon>
        <taxon>Deinococcales</taxon>
        <taxon>Deinococcaceae</taxon>
        <taxon>Deinococcus</taxon>
    </lineage>
</organism>
<sequence>MNNKTNNNSVLFDLADGAVRPLGFEVLEVTQQREGRDLIVLVRIDRLDEQPVTMDDLTAASRAAEAEFDRVDPIEEEYRLEFESPGGKRPLLRARHFERMIGLKAKVRSLPGRGEHNFTAPIKAVEGDTVTFEHGGEDLSVNVADIQASLAEFPDRHR</sequence>
<evidence type="ECO:0000255" key="1">
    <source>
        <dbReference type="HAMAP-Rule" id="MF_01077"/>
    </source>
</evidence>
<protein>
    <recommendedName>
        <fullName evidence="1">Ribosome maturation factor RimP</fullName>
    </recommendedName>
</protein>
<comment type="function">
    <text evidence="1">Required for maturation of 30S ribosomal subunits.</text>
</comment>
<comment type="subcellular location">
    <subcellularLocation>
        <location evidence="1">Cytoplasm</location>
    </subcellularLocation>
</comment>
<comment type="similarity">
    <text evidence="1">Belongs to the RimP family.</text>
</comment>
<reference key="1">
    <citation type="journal article" date="1999" name="Science">
        <title>Genome sequence of the radioresistant bacterium Deinococcus radiodurans R1.</title>
        <authorList>
            <person name="White O."/>
            <person name="Eisen J.A."/>
            <person name="Heidelberg J.F."/>
            <person name="Hickey E.K."/>
            <person name="Peterson J.D."/>
            <person name="Dodson R.J."/>
            <person name="Haft D.H."/>
            <person name="Gwinn M.L."/>
            <person name="Nelson W.C."/>
            <person name="Richardson D.L."/>
            <person name="Moffat K.S."/>
            <person name="Qin H."/>
            <person name="Jiang L."/>
            <person name="Pamphile W."/>
            <person name="Crosby M."/>
            <person name="Shen M."/>
            <person name="Vamathevan J.J."/>
            <person name="Lam P."/>
            <person name="McDonald L.A."/>
            <person name="Utterback T.R."/>
            <person name="Zalewski C."/>
            <person name="Makarova K.S."/>
            <person name="Aravind L."/>
            <person name="Daly M.J."/>
            <person name="Minton K.W."/>
            <person name="Fleischmann R.D."/>
            <person name="Ketchum K.A."/>
            <person name="Nelson K.E."/>
            <person name="Salzberg S.L."/>
            <person name="Smith H.O."/>
            <person name="Venter J.C."/>
            <person name="Fraser C.M."/>
        </authorList>
    </citation>
    <scope>NUCLEOTIDE SEQUENCE [LARGE SCALE GENOMIC DNA]</scope>
    <source>
        <strain>ATCC 13939 / DSM 20539 / JCM 16871 / CCUG 27074 / LMG 4051 / NBRC 15346 / NCIMB 9279 / VKM B-1422 / R1</strain>
    </source>
</reference>
<accession>Q9RTG8</accession>
<proteinExistence type="inferred from homology"/>